<name>TRY5_AEDAE</name>
<keyword id="KW-0222">Digestion</keyword>
<keyword id="KW-1015">Disulfide bond</keyword>
<keyword id="KW-0378">Hydrolase</keyword>
<keyword id="KW-0645">Protease</keyword>
<keyword id="KW-1185">Reference proteome</keyword>
<keyword id="KW-0964">Secreted</keyword>
<keyword id="KW-0720">Serine protease</keyword>
<keyword id="KW-0732">Signal</keyword>
<keyword id="KW-0865">Zymogen</keyword>
<organism>
    <name type="scientific">Aedes aegypti</name>
    <name type="common">Yellowfever mosquito</name>
    <name type="synonym">Culex aegypti</name>
    <dbReference type="NCBI Taxonomy" id="7159"/>
    <lineage>
        <taxon>Eukaryota</taxon>
        <taxon>Metazoa</taxon>
        <taxon>Ecdysozoa</taxon>
        <taxon>Arthropoda</taxon>
        <taxon>Hexapoda</taxon>
        <taxon>Insecta</taxon>
        <taxon>Pterygota</taxon>
        <taxon>Neoptera</taxon>
        <taxon>Endopterygota</taxon>
        <taxon>Diptera</taxon>
        <taxon>Nematocera</taxon>
        <taxon>Culicoidea</taxon>
        <taxon>Culicidae</taxon>
        <taxon>Culicinae</taxon>
        <taxon>Aedini</taxon>
        <taxon>Aedes</taxon>
        <taxon>Stegomyia</taxon>
    </lineage>
</organism>
<accession>P29787</accession>
<accession>Q16ID7</accession>
<gene>
    <name type="ORF">AAEL013712</name>
</gene>
<feature type="signal peptide" evidence="2">
    <location>
        <begin position="1"/>
        <end position="18"/>
    </location>
</feature>
<feature type="propeptide" id="PRO_0000028241" description="Activation peptide">
    <location>
        <begin position="19"/>
        <end position="39"/>
    </location>
</feature>
<feature type="chain" id="PRO_0000028242" description="Trypsin 5G1">
    <location>
        <begin position="40"/>
        <end position="266"/>
    </location>
</feature>
<feature type="domain" description="Peptidase S1" evidence="3">
    <location>
        <begin position="40"/>
        <end position="265"/>
    </location>
</feature>
<feature type="active site" description="Charge relay system" evidence="1">
    <location>
        <position position="81"/>
    </location>
</feature>
<feature type="active site" description="Charge relay system" evidence="1">
    <location>
        <position position="125"/>
    </location>
</feature>
<feature type="active site" description="Charge relay system" evidence="1">
    <location>
        <position position="221"/>
    </location>
</feature>
<feature type="site" description="Required for specificity" evidence="1">
    <location>
        <position position="215"/>
    </location>
</feature>
<feature type="disulfide bond" evidence="3">
    <location>
        <begin position="66"/>
        <end position="82"/>
    </location>
</feature>
<feature type="disulfide bond" evidence="3">
    <location>
        <begin position="190"/>
        <end position="206"/>
    </location>
</feature>
<feature type="disulfide bond" evidence="3">
    <location>
        <begin position="217"/>
        <end position="241"/>
    </location>
</feature>
<feature type="sequence conflict" description="In Ref. 2; CAA45715." evidence="4" ref="2">
    <original>A</original>
    <variation>T</variation>
    <location>
        <position position="151"/>
    </location>
</feature>
<comment type="function">
    <text>Major function may be to aid in digestion of the blood meal.</text>
</comment>
<comment type="catalytic activity">
    <reaction>
        <text>Preferential cleavage: Arg-|-Xaa, Lys-|-Xaa.</text>
        <dbReference type="EC" id="3.4.21.4"/>
    </reaction>
</comment>
<comment type="subcellular location">
    <subcellularLocation>
        <location>Secreted</location>
        <location>Extracellular space</location>
    </subcellularLocation>
</comment>
<comment type="tissue specificity">
    <text>Midgut.</text>
</comment>
<comment type="similarity">
    <text evidence="3">Belongs to the peptidase S1 family.</text>
</comment>
<comment type="sequence caution" evidence="4">
    <conflict type="frameshift">
        <sequence resource="EMBL-CDS" id="CAA45715"/>
    </conflict>
</comment>
<sequence length="266" mass="28246">MTRIILILTATFFACALGASTGGSHPLRPWWNALRSSGRIVGGFEVPVEEVPFQVSLSGVGSSHFCGGSLLSERWVMTAGHCAASGQTNLQVRIGSSQHASGGQLIKVKKVNRHPKYDEVTTDYDFALLELEETVTFSDSCAPVKLPQKDAPVNEGTCLQVSGWGNTQNPSESSEVLRAAYVPAVSQKECHKAYLSFGGVTDRMVCAGFKEGGKDSCQGDSGGPLVHDNTLVGVVSWGYGCAQAGYPGVYARVASVRDWVKEVSGL</sequence>
<evidence type="ECO:0000250" key="1"/>
<evidence type="ECO:0000255" key="2"/>
<evidence type="ECO:0000255" key="3">
    <source>
        <dbReference type="PROSITE-ProRule" id="PRU00274"/>
    </source>
</evidence>
<evidence type="ECO:0000305" key="4"/>
<dbReference type="EC" id="3.4.21.4"/>
<dbReference type="EMBL" id="CH478086">
    <property type="protein sequence ID" value="EAT34029.1"/>
    <property type="molecule type" value="Genomic_DNA"/>
</dbReference>
<dbReference type="EMBL" id="X64363">
    <property type="protein sequence ID" value="CAA45715.1"/>
    <property type="status" value="ALT_FRAME"/>
    <property type="molecule type" value="mRNA"/>
</dbReference>
<dbReference type="PIR" id="S19891">
    <property type="entry name" value="TRWV5Y"/>
</dbReference>
<dbReference type="RefSeq" id="XP_001663895.1">
    <property type="nucleotide sequence ID" value="XM_001663845.1"/>
</dbReference>
<dbReference type="SMR" id="P29787"/>
<dbReference type="FunCoup" id="P29787">
    <property type="interactions" value="42"/>
</dbReference>
<dbReference type="MEROPS" id="S01.130"/>
<dbReference type="PaxDb" id="7159-AAEL013712-PA"/>
<dbReference type="KEGG" id="aag:5578510"/>
<dbReference type="VEuPathDB" id="VectorBase:AAEL010196"/>
<dbReference type="eggNOG" id="KOG3627">
    <property type="taxonomic scope" value="Eukaryota"/>
</dbReference>
<dbReference type="HOGENOM" id="CLU_006842_7_0_1"/>
<dbReference type="InParanoid" id="P29787"/>
<dbReference type="OrthoDB" id="10059102at2759"/>
<dbReference type="PhylomeDB" id="P29787"/>
<dbReference type="Proteomes" id="UP000008820">
    <property type="component" value="Unassembled WGS sequence"/>
</dbReference>
<dbReference type="Proteomes" id="UP000682892">
    <property type="component" value="Chromosome 3"/>
</dbReference>
<dbReference type="GO" id="GO:0005576">
    <property type="term" value="C:extracellular region"/>
    <property type="evidence" value="ECO:0007669"/>
    <property type="project" value="UniProtKB-SubCell"/>
</dbReference>
<dbReference type="GO" id="GO:0004252">
    <property type="term" value="F:serine-type endopeptidase activity"/>
    <property type="evidence" value="ECO:0007669"/>
    <property type="project" value="UniProtKB-EC"/>
</dbReference>
<dbReference type="GO" id="GO:0007586">
    <property type="term" value="P:digestion"/>
    <property type="evidence" value="ECO:0007669"/>
    <property type="project" value="UniProtKB-KW"/>
</dbReference>
<dbReference type="GO" id="GO:0006508">
    <property type="term" value="P:proteolysis"/>
    <property type="evidence" value="ECO:0007669"/>
    <property type="project" value="UniProtKB-KW"/>
</dbReference>
<dbReference type="CDD" id="cd00190">
    <property type="entry name" value="Tryp_SPc"/>
    <property type="match status" value="1"/>
</dbReference>
<dbReference type="FunFam" id="2.40.10.10:FF:000077">
    <property type="entry name" value="Predicted protein"/>
    <property type="match status" value="1"/>
</dbReference>
<dbReference type="Gene3D" id="2.40.10.10">
    <property type="entry name" value="Trypsin-like serine proteases"/>
    <property type="match status" value="1"/>
</dbReference>
<dbReference type="InterPro" id="IPR050430">
    <property type="entry name" value="Peptidase_S1"/>
</dbReference>
<dbReference type="InterPro" id="IPR009003">
    <property type="entry name" value="Peptidase_S1_PA"/>
</dbReference>
<dbReference type="InterPro" id="IPR043504">
    <property type="entry name" value="Peptidase_S1_PA_chymotrypsin"/>
</dbReference>
<dbReference type="InterPro" id="IPR001314">
    <property type="entry name" value="Peptidase_S1A"/>
</dbReference>
<dbReference type="InterPro" id="IPR001254">
    <property type="entry name" value="Trypsin_dom"/>
</dbReference>
<dbReference type="InterPro" id="IPR018114">
    <property type="entry name" value="TRYPSIN_HIS"/>
</dbReference>
<dbReference type="InterPro" id="IPR033116">
    <property type="entry name" value="TRYPSIN_SER"/>
</dbReference>
<dbReference type="PANTHER" id="PTHR24276:SF97">
    <property type="entry name" value="GH13245P2-RELATED"/>
    <property type="match status" value="1"/>
</dbReference>
<dbReference type="PANTHER" id="PTHR24276">
    <property type="entry name" value="POLYSERASE-RELATED"/>
    <property type="match status" value="1"/>
</dbReference>
<dbReference type="Pfam" id="PF00089">
    <property type="entry name" value="Trypsin"/>
    <property type="match status" value="1"/>
</dbReference>
<dbReference type="PRINTS" id="PR00722">
    <property type="entry name" value="CHYMOTRYPSIN"/>
</dbReference>
<dbReference type="SMART" id="SM00020">
    <property type="entry name" value="Tryp_SPc"/>
    <property type="match status" value="1"/>
</dbReference>
<dbReference type="SUPFAM" id="SSF50494">
    <property type="entry name" value="Trypsin-like serine proteases"/>
    <property type="match status" value="1"/>
</dbReference>
<dbReference type="PROSITE" id="PS50240">
    <property type="entry name" value="TRYPSIN_DOM"/>
    <property type="match status" value="1"/>
</dbReference>
<dbReference type="PROSITE" id="PS00134">
    <property type="entry name" value="TRYPSIN_HIS"/>
    <property type="match status" value="1"/>
</dbReference>
<dbReference type="PROSITE" id="PS00135">
    <property type="entry name" value="TRYPSIN_SER"/>
    <property type="match status" value="1"/>
</dbReference>
<reference key="1">
    <citation type="journal article" date="2007" name="Science">
        <title>Genome sequence of Aedes aegypti, a major arbovirus vector.</title>
        <authorList>
            <person name="Nene V."/>
            <person name="Wortman J.R."/>
            <person name="Lawson D."/>
            <person name="Haas B.J."/>
            <person name="Kodira C.D."/>
            <person name="Tu Z.J."/>
            <person name="Loftus B.J."/>
            <person name="Xi Z."/>
            <person name="Megy K."/>
            <person name="Grabherr M."/>
            <person name="Ren Q."/>
            <person name="Zdobnov E.M."/>
            <person name="Lobo N.F."/>
            <person name="Campbell K.S."/>
            <person name="Brown S.E."/>
            <person name="Bonaldo M.F."/>
            <person name="Zhu J."/>
            <person name="Sinkins S.P."/>
            <person name="Hogenkamp D.G."/>
            <person name="Amedeo P."/>
            <person name="Arensburger P."/>
            <person name="Atkinson P.W."/>
            <person name="Bidwell S.L."/>
            <person name="Biedler J."/>
            <person name="Birney E."/>
            <person name="Bruggner R.V."/>
            <person name="Costas J."/>
            <person name="Coy M.R."/>
            <person name="Crabtree J."/>
            <person name="Crawford M."/>
            <person name="DeBruyn B."/>
            <person name="DeCaprio D."/>
            <person name="Eiglmeier K."/>
            <person name="Eisenstadt E."/>
            <person name="El-Dorry H."/>
            <person name="Gelbart W.M."/>
            <person name="Gomes S.L."/>
            <person name="Hammond M."/>
            <person name="Hannick L.I."/>
            <person name="Hogan J.R."/>
            <person name="Holmes M.H."/>
            <person name="Jaffe D."/>
            <person name="Johnston S.J."/>
            <person name="Kennedy R.C."/>
            <person name="Koo H."/>
            <person name="Kravitz S."/>
            <person name="Kriventseva E.V."/>
            <person name="Kulp D."/>
            <person name="Labutti K."/>
            <person name="Lee E."/>
            <person name="Li S."/>
            <person name="Lovin D.D."/>
            <person name="Mao C."/>
            <person name="Mauceli E."/>
            <person name="Menck C.F."/>
            <person name="Miller J.R."/>
            <person name="Montgomery P."/>
            <person name="Mori A."/>
            <person name="Nascimento A.L."/>
            <person name="Naveira H.F."/>
            <person name="Nusbaum C."/>
            <person name="O'Leary S.B."/>
            <person name="Orvis J."/>
            <person name="Pertea M."/>
            <person name="Quesneville H."/>
            <person name="Reidenbach K.R."/>
            <person name="Rogers Y.-H.C."/>
            <person name="Roth C.W."/>
            <person name="Schneider J.R."/>
            <person name="Schatz M."/>
            <person name="Shumway M."/>
            <person name="Stanke M."/>
            <person name="Stinson E.O."/>
            <person name="Tubio J.M.C."/>
            <person name="Vanzee J.P."/>
            <person name="Verjovski-Almeida S."/>
            <person name="Werner D."/>
            <person name="White O.R."/>
            <person name="Wyder S."/>
            <person name="Zeng Q."/>
            <person name="Zhao Q."/>
            <person name="Zhao Y."/>
            <person name="Hill C.A."/>
            <person name="Raikhel A.S."/>
            <person name="Soares M.B."/>
            <person name="Knudson D.L."/>
            <person name="Lee N.H."/>
            <person name="Galagan J."/>
            <person name="Salzberg S.L."/>
            <person name="Paulsen I.T."/>
            <person name="Dimopoulos G."/>
            <person name="Collins F.H."/>
            <person name="Bruce B."/>
            <person name="Fraser-Liggett C.M."/>
            <person name="Severson D.W."/>
        </authorList>
    </citation>
    <scope>NUCLEOTIDE SEQUENCE [LARGE SCALE GENOMIC DNA]</scope>
    <source>
        <strain>LVPib12</strain>
    </source>
</reference>
<reference key="2">
    <citation type="journal article" date="1993" name="Insect Mol. Biol.">
        <title>Isolation, sequencing and characterization of two cDNA clones coding for trypsin-like enzymes from the midgut of Aedes aegypti.</title>
        <authorList>
            <person name="Kalhok S."/>
            <person name="Tabak L.M."/>
            <person name="Prosser D.E."/>
            <person name="Brook W."/>
            <person name="Downer A.E.R."/>
            <person name="White B.N."/>
        </authorList>
    </citation>
    <scope>NUCLEOTIDE SEQUENCE [MRNA] OF 29-266</scope>
</reference>
<protein>
    <recommendedName>
        <fullName>Trypsin 5G1</fullName>
        <ecNumber>3.4.21.4</ecNumber>
    </recommendedName>
</protein>
<proteinExistence type="evidence at transcript level"/>